<evidence type="ECO:0000255" key="1">
    <source>
        <dbReference type="HAMAP-Rule" id="MF_01201"/>
    </source>
</evidence>
<proteinExistence type="inferred from homology"/>
<keyword id="KW-0413">Isomerase</keyword>
<keyword id="KW-0663">Pyridoxal phosphate</keyword>
<keyword id="KW-1185">Reference proteome</keyword>
<dbReference type="EC" id="5.1.1.1" evidence="1"/>
<dbReference type="EMBL" id="CP000478">
    <property type="protein sequence ID" value="ABK16261.1"/>
    <property type="molecule type" value="Genomic_DNA"/>
</dbReference>
<dbReference type="RefSeq" id="WP_011697434.1">
    <property type="nucleotide sequence ID" value="NC_008554.1"/>
</dbReference>
<dbReference type="SMR" id="A0LFQ9"/>
<dbReference type="FunCoup" id="A0LFQ9">
    <property type="interactions" value="388"/>
</dbReference>
<dbReference type="STRING" id="335543.Sfum_0562"/>
<dbReference type="KEGG" id="sfu:Sfum_0562"/>
<dbReference type="eggNOG" id="COG0787">
    <property type="taxonomic scope" value="Bacteria"/>
</dbReference>
<dbReference type="HOGENOM" id="CLU_028393_2_2_7"/>
<dbReference type="InParanoid" id="A0LFQ9"/>
<dbReference type="UniPathway" id="UPA00042">
    <property type="reaction ID" value="UER00497"/>
</dbReference>
<dbReference type="Proteomes" id="UP000001784">
    <property type="component" value="Chromosome"/>
</dbReference>
<dbReference type="GO" id="GO:0005829">
    <property type="term" value="C:cytosol"/>
    <property type="evidence" value="ECO:0007669"/>
    <property type="project" value="TreeGrafter"/>
</dbReference>
<dbReference type="GO" id="GO:0008784">
    <property type="term" value="F:alanine racemase activity"/>
    <property type="evidence" value="ECO:0007669"/>
    <property type="project" value="UniProtKB-UniRule"/>
</dbReference>
<dbReference type="GO" id="GO:0030170">
    <property type="term" value="F:pyridoxal phosphate binding"/>
    <property type="evidence" value="ECO:0007669"/>
    <property type="project" value="UniProtKB-UniRule"/>
</dbReference>
<dbReference type="GO" id="GO:0030632">
    <property type="term" value="P:D-alanine biosynthetic process"/>
    <property type="evidence" value="ECO:0007669"/>
    <property type="project" value="UniProtKB-UniRule"/>
</dbReference>
<dbReference type="CDD" id="cd00430">
    <property type="entry name" value="PLPDE_III_AR"/>
    <property type="match status" value="1"/>
</dbReference>
<dbReference type="FunFam" id="3.20.20.10:FF:000002">
    <property type="entry name" value="Alanine racemase"/>
    <property type="match status" value="1"/>
</dbReference>
<dbReference type="Gene3D" id="3.20.20.10">
    <property type="entry name" value="Alanine racemase"/>
    <property type="match status" value="1"/>
</dbReference>
<dbReference type="Gene3D" id="2.40.37.10">
    <property type="entry name" value="Lyase, Ornithine Decarboxylase, Chain A, domain 1"/>
    <property type="match status" value="1"/>
</dbReference>
<dbReference type="HAMAP" id="MF_01201">
    <property type="entry name" value="Ala_racemase"/>
    <property type="match status" value="1"/>
</dbReference>
<dbReference type="InterPro" id="IPR000821">
    <property type="entry name" value="Ala_racemase"/>
</dbReference>
<dbReference type="InterPro" id="IPR009006">
    <property type="entry name" value="Ala_racemase/Decarboxylase_C"/>
</dbReference>
<dbReference type="InterPro" id="IPR011079">
    <property type="entry name" value="Ala_racemase_C"/>
</dbReference>
<dbReference type="InterPro" id="IPR001608">
    <property type="entry name" value="Ala_racemase_N"/>
</dbReference>
<dbReference type="InterPro" id="IPR020622">
    <property type="entry name" value="Ala_racemase_pyridoxalP-BS"/>
</dbReference>
<dbReference type="InterPro" id="IPR029066">
    <property type="entry name" value="PLP-binding_barrel"/>
</dbReference>
<dbReference type="NCBIfam" id="TIGR00492">
    <property type="entry name" value="alr"/>
    <property type="match status" value="1"/>
</dbReference>
<dbReference type="PANTHER" id="PTHR30511">
    <property type="entry name" value="ALANINE RACEMASE"/>
    <property type="match status" value="1"/>
</dbReference>
<dbReference type="PANTHER" id="PTHR30511:SF0">
    <property type="entry name" value="ALANINE RACEMASE, CATABOLIC-RELATED"/>
    <property type="match status" value="1"/>
</dbReference>
<dbReference type="Pfam" id="PF00842">
    <property type="entry name" value="Ala_racemase_C"/>
    <property type="match status" value="1"/>
</dbReference>
<dbReference type="Pfam" id="PF01168">
    <property type="entry name" value="Ala_racemase_N"/>
    <property type="match status" value="1"/>
</dbReference>
<dbReference type="PRINTS" id="PR00992">
    <property type="entry name" value="ALARACEMASE"/>
</dbReference>
<dbReference type="SMART" id="SM01005">
    <property type="entry name" value="Ala_racemase_C"/>
    <property type="match status" value="1"/>
</dbReference>
<dbReference type="SUPFAM" id="SSF50621">
    <property type="entry name" value="Alanine racemase C-terminal domain-like"/>
    <property type="match status" value="1"/>
</dbReference>
<dbReference type="SUPFAM" id="SSF51419">
    <property type="entry name" value="PLP-binding barrel"/>
    <property type="match status" value="1"/>
</dbReference>
<dbReference type="PROSITE" id="PS00395">
    <property type="entry name" value="ALANINE_RACEMASE"/>
    <property type="match status" value="1"/>
</dbReference>
<protein>
    <recommendedName>
        <fullName evidence="1">Alanine racemase</fullName>
        <ecNumber evidence="1">5.1.1.1</ecNumber>
    </recommendedName>
</protein>
<comment type="function">
    <text evidence="1">Catalyzes the interconversion of L-alanine and D-alanine. May also act on other amino acids.</text>
</comment>
<comment type="catalytic activity">
    <reaction evidence="1">
        <text>L-alanine = D-alanine</text>
        <dbReference type="Rhea" id="RHEA:20249"/>
        <dbReference type="ChEBI" id="CHEBI:57416"/>
        <dbReference type="ChEBI" id="CHEBI:57972"/>
        <dbReference type="EC" id="5.1.1.1"/>
    </reaction>
</comment>
<comment type="cofactor">
    <cofactor evidence="1">
        <name>pyridoxal 5'-phosphate</name>
        <dbReference type="ChEBI" id="CHEBI:597326"/>
    </cofactor>
</comment>
<comment type="pathway">
    <text evidence="1">Amino-acid biosynthesis; D-alanine biosynthesis; D-alanine from L-alanine: step 1/1.</text>
</comment>
<comment type="similarity">
    <text evidence="1">Belongs to the alanine racemase family.</text>
</comment>
<name>ALR_SYNFM</name>
<sequence length="375" mass="40621">MAHSWVEIDLAALRHNYSRAKERLAPGSRILGVVKSDAYGHGMIPVARELVACGASFLAVSKHWEAVDLRAAGIRLPILCLLGVEPSEMAEAIRNEIRPVIYRIDHARRLSDTARSLNATATVHVKLDTGMGRLGIPCRHLEAFLNELLTLPAIRLEGVLSHFASADEADKTSSTLQLTRFREAMALLSARGLSVLGHIANSAGLLDLPQAHFDLARPGIMLYGSPPSLELHKPADLRPVMTFKSKIIQLKDVQAGQPIGYGGTFVTAAPGRIATIPVGYDDGYPRLLSNRGRVLVRGMSAPVVGRVSMNMITADVTHIPSAREDDEVVLLGAQGTERVTAEEIAQLCGTISYEIYCSIGRNRFKSFHNGIANSN</sequence>
<feature type="chain" id="PRO_1000085509" description="Alanine racemase">
    <location>
        <begin position="1"/>
        <end position="375"/>
    </location>
</feature>
<feature type="active site" description="Proton acceptor; specific for D-alanine" evidence="1">
    <location>
        <position position="35"/>
    </location>
</feature>
<feature type="active site" description="Proton acceptor; specific for L-alanine" evidence="1">
    <location>
        <position position="261"/>
    </location>
</feature>
<feature type="binding site" evidence="1">
    <location>
        <position position="133"/>
    </location>
    <ligand>
        <name>substrate</name>
    </ligand>
</feature>
<feature type="binding site" evidence="1">
    <location>
        <position position="309"/>
    </location>
    <ligand>
        <name>substrate</name>
    </ligand>
</feature>
<feature type="modified residue" description="N6-(pyridoxal phosphate)lysine" evidence="1">
    <location>
        <position position="35"/>
    </location>
</feature>
<organism>
    <name type="scientific">Syntrophobacter fumaroxidans (strain DSM 10017 / MPOB)</name>
    <dbReference type="NCBI Taxonomy" id="335543"/>
    <lineage>
        <taxon>Bacteria</taxon>
        <taxon>Pseudomonadati</taxon>
        <taxon>Thermodesulfobacteriota</taxon>
        <taxon>Syntrophobacteria</taxon>
        <taxon>Syntrophobacterales</taxon>
        <taxon>Syntrophobacteraceae</taxon>
        <taxon>Syntrophobacter</taxon>
    </lineage>
</organism>
<gene>
    <name type="primary">alr</name>
    <name type="ordered locus">Sfum_0562</name>
</gene>
<accession>A0LFQ9</accession>
<reference key="1">
    <citation type="submission" date="2006-10" db="EMBL/GenBank/DDBJ databases">
        <title>Complete sequence of Syntrophobacter fumaroxidans MPOB.</title>
        <authorList>
            <consortium name="US DOE Joint Genome Institute"/>
            <person name="Copeland A."/>
            <person name="Lucas S."/>
            <person name="Lapidus A."/>
            <person name="Barry K."/>
            <person name="Detter J.C."/>
            <person name="Glavina del Rio T."/>
            <person name="Hammon N."/>
            <person name="Israni S."/>
            <person name="Pitluck S."/>
            <person name="Goltsman E.G."/>
            <person name="Martinez M."/>
            <person name="Schmutz J."/>
            <person name="Larimer F."/>
            <person name="Land M."/>
            <person name="Hauser L."/>
            <person name="Kyrpides N."/>
            <person name="Kim E."/>
            <person name="Boone D.R."/>
            <person name="Brockman F."/>
            <person name="Culley D."/>
            <person name="Ferry J."/>
            <person name="Gunsalus R."/>
            <person name="McInerney M.J."/>
            <person name="Morrison M."/>
            <person name="Plugge C."/>
            <person name="Rohlin L."/>
            <person name="Scholten J."/>
            <person name="Sieber J."/>
            <person name="Stams A.J.M."/>
            <person name="Worm P."/>
            <person name="Henstra A.M."/>
            <person name="Richardson P."/>
        </authorList>
    </citation>
    <scope>NUCLEOTIDE SEQUENCE [LARGE SCALE GENOMIC DNA]</scope>
    <source>
        <strain>DSM 10017 / MPOB</strain>
    </source>
</reference>